<accession>P41297</accession>
<gene>
    <name evidence="1" type="primary">MT-ND2</name>
    <name type="synonym">MTND2</name>
    <name type="synonym">NADH2</name>
    <name type="synonym">ND2</name>
</gene>
<dbReference type="EC" id="7.1.1.2" evidence="1"/>
<dbReference type="EMBL" id="X72204">
    <property type="protein sequence ID" value="CAA50996.1"/>
    <property type="molecule type" value="Genomic_DNA"/>
</dbReference>
<dbReference type="PIR" id="S41821">
    <property type="entry name" value="S41821"/>
</dbReference>
<dbReference type="RefSeq" id="NP_007057.1">
    <property type="nucleotide sequence ID" value="NC_001601.1"/>
</dbReference>
<dbReference type="SMR" id="P41297"/>
<dbReference type="GeneID" id="807736"/>
<dbReference type="KEGG" id="bmus:807736"/>
<dbReference type="CTD" id="4536"/>
<dbReference type="OrthoDB" id="4092844at2759"/>
<dbReference type="Proteomes" id="UP000694857">
    <property type="component" value="Mitochondrion MT"/>
</dbReference>
<dbReference type="GO" id="GO:0005743">
    <property type="term" value="C:mitochondrial inner membrane"/>
    <property type="evidence" value="ECO:0000250"/>
    <property type="project" value="UniProtKB"/>
</dbReference>
<dbReference type="GO" id="GO:0008137">
    <property type="term" value="F:NADH dehydrogenase (ubiquinone) activity"/>
    <property type="evidence" value="ECO:0000250"/>
    <property type="project" value="UniProtKB"/>
</dbReference>
<dbReference type="GO" id="GO:0006120">
    <property type="term" value="P:mitochondrial electron transport, NADH to ubiquinone"/>
    <property type="evidence" value="ECO:0000250"/>
    <property type="project" value="UniProtKB"/>
</dbReference>
<dbReference type="GO" id="GO:0032981">
    <property type="term" value="P:mitochondrial respiratory chain complex I assembly"/>
    <property type="evidence" value="ECO:0000250"/>
    <property type="project" value="UniProtKB"/>
</dbReference>
<dbReference type="InterPro" id="IPR050175">
    <property type="entry name" value="Complex_I_Subunit_2"/>
</dbReference>
<dbReference type="InterPro" id="IPR010933">
    <property type="entry name" value="NADH_DH_su2_C"/>
</dbReference>
<dbReference type="InterPro" id="IPR003917">
    <property type="entry name" value="NADH_UbQ_OxRdtase_chain2"/>
</dbReference>
<dbReference type="InterPro" id="IPR001750">
    <property type="entry name" value="ND/Mrp_TM"/>
</dbReference>
<dbReference type="PANTHER" id="PTHR46552">
    <property type="entry name" value="NADH-UBIQUINONE OXIDOREDUCTASE CHAIN 2"/>
    <property type="match status" value="1"/>
</dbReference>
<dbReference type="PANTHER" id="PTHR46552:SF1">
    <property type="entry name" value="NADH-UBIQUINONE OXIDOREDUCTASE CHAIN 2"/>
    <property type="match status" value="1"/>
</dbReference>
<dbReference type="Pfam" id="PF06444">
    <property type="entry name" value="NADH_dehy_S2_C"/>
    <property type="match status" value="1"/>
</dbReference>
<dbReference type="Pfam" id="PF00361">
    <property type="entry name" value="Proton_antipo_M"/>
    <property type="match status" value="1"/>
</dbReference>
<dbReference type="PRINTS" id="PR01436">
    <property type="entry name" value="NADHDHGNASE2"/>
</dbReference>
<evidence type="ECO:0000250" key="1">
    <source>
        <dbReference type="UniProtKB" id="P03891"/>
    </source>
</evidence>
<evidence type="ECO:0000250" key="2">
    <source>
        <dbReference type="UniProtKB" id="P03892"/>
    </source>
</evidence>
<evidence type="ECO:0000255" key="3"/>
<evidence type="ECO:0000305" key="4"/>
<proteinExistence type="inferred from homology"/>
<reference key="1">
    <citation type="journal article" date="1993" name="J. Mol. Evol.">
        <title>Comparison between the complete mtDNA sequences of the blue and the fin whale, two species that can hybridize in nature.</title>
        <authorList>
            <person name="Arnason U."/>
            <person name="Gullberg A."/>
        </authorList>
    </citation>
    <scope>NUCLEOTIDE SEQUENCE [GENOMIC DNA]</scope>
</reference>
<name>NU2M_BALMU</name>
<protein>
    <recommendedName>
        <fullName evidence="1">NADH-ubiquinone oxidoreductase chain 2</fullName>
        <ecNumber evidence="1">7.1.1.2</ecNumber>
    </recommendedName>
    <alternativeName>
        <fullName>NADH dehydrogenase subunit 2</fullName>
    </alternativeName>
</protein>
<keyword id="KW-0249">Electron transport</keyword>
<keyword id="KW-0472">Membrane</keyword>
<keyword id="KW-0496">Mitochondrion</keyword>
<keyword id="KW-0999">Mitochondrion inner membrane</keyword>
<keyword id="KW-0520">NAD</keyword>
<keyword id="KW-1185">Reference proteome</keyword>
<keyword id="KW-0679">Respiratory chain</keyword>
<keyword id="KW-1278">Translocase</keyword>
<keyword id="KW-0812">Transmembrane</keyword>
<keyword id="KW-1133">Transmembrane helix</keyword>
<keyword id="KW-0813">Transport</keyword>
<keyword id="KW-0830">Ubiquinone</keyword>
<feature type="chain" id="PRO_0000117556" description="NADH-ubiquinone oxidoreductase chain 2">
    <location>
        <begin position="1"/>
        <end position="347"/>
    </location>
</feature>
<feature type="transmembrane region" description="Helical" evidence="3">
    <location>
        <begin position="1"/>
        <end position="21"/>
    </location>
</feature>
<feature type="transmembrane region" description="Helical" evidence="3">
    <location>
        <begin position="25"/>
        <end position="45"/>
    </location>
</feature>
<feature type="transmembrane region" description="Helical" evidence="3">
    <location>
        <begin position="59"/>
        <end position="79"/>
    </location>
</feature>
<feature type="transmembrane region" description="Helical" evidence="3">
    <location>
        <begin position="96"/>
        <end position="116"/>
    </location>
</feature>
<feature type="transmembrane region" description="Helical" evidence="3">
    <location>
        <begin position="122"/>
        <end position="142"/>
    </location>
</feature>
<feature type="transmembrane region" description="Helical" evidence="3">
    <location>
        <begin position="149"/>
        <end position="169"/>
    </location>
</feature>
<feature type="transmembrane region" description="Helical" evidence="3">
    <location>
        <begin position="200"/>
        <end position="220"/>
    </location>
</feature>
<feature type="transmembrane region" description="Helical" evidence="3">
    <location>
        <begin position="239"/>
        <end position="259"/>
    </location>
</feature>
<feature type="transmembrane region" description="Helical" evidence="3">
    <location>
        <begin position="274"/>
        <end position="294"/>
    </location>
</feature>
<feature type="transmembrane region" description="Helical" evidence="3">
    <location>
        <begin position="325"/>
        <end position="345"/>
    </location>
</feature>
<sequence length="347" mass="38906">MNPSIFIILLTTLILGTMMVITSSHWLLAWIGFEMNMMAFIPIMMKNPSPRATEASTKYLLTQATASALLMMAVIINLMYSGQWTITKLFNPTASTLMTVALAIKLGLAPFHFWVPEVTQGIPLTTGLILLTWQKLAPLSILYQISPSINLYLMLTMSLLSILVGGWGGLNQTQLRKIMAYSSIAHMGWMTTILPYNPTLTLLNLLIYITMTFTMFMLFIQNSTTTTLSLSQTWNKTPIITTLTMLTLLSMGGLPPLSGFMPKWMIIQELTKNDILIMPTFMAITALLNLYFYMRLTYSTALTLFPSTNNMKMKWQFSPTKRAPLLPTAIVISTMLLPLTPMLSILL</sequence>
<comment type="function">
    <text evidence="1">Core subunit of the mitochondrial membrane respiratory chain NADH dehydrogenase (Complex I) which catalyzes electron transfer from NADH through the respiratory chain, using ubiquinone as an electron acceptor. Essential for the catalytic activity and assembly of complex I.</text>
</comment>
<comment type="catalytic activity">
    <reaction evidence="1">
        <text>a ubiquinone + NADH + 5 H(+)(in) = a ubiquinol + NAD(+) + 4 H(+)(out)</text>
        <dbReference type="Rhea" id="RHEA:29091"/>
        <dbReference type="Rhea" id="RHEA-COMP:9565"/>
        <dbReference type="Rhea" id="RHEA-COMP:9566"/>
        <dbReference type="ChEBI" id="CHEBI:15378"/>
        <dbReference type="ChEBI" id="CHEBI:16389"/>
        <dbReference type="ChEBI" id="CHEBI:17976"/>
        <dbReference type="ChEBI" id="CHEBI:57540"/>
        <dbReference type="ChEBI" id="CHEBI:57945"/>
        <dbReference type="EC" id="7.1.1.2"/>
    </reaction>
</comment>
<comment type="subunit">
    <text evidence="1 2">Core subunit of respiratory chain NADH dehydrogenase (Complex I) which is composed of 45 different subunits. Interacts with TMEM242 (By similarity).</text>
</comment>
<comment type="subcellular location">
    <subcellularLocation>
        <location evidence="2">Mitochondrion inner membrane</location>
        <topology evidence="3">Multi-pass membrane protein</topology>
    </subcellularLocation>
</comment>
<comment type="similarity">
    <text evidence="4">Belongs to the complex I subunit 2 family.</text>
</comment>
<geneLocation type="mitochondrion"/>
<organism>
    <name type="scientific">Balaenoptera musculus</name>
    <name type="common">Blue whale</name>
    <dbReference type="NCBI Taxonomy" id="9771"/>
    <lineage>
        <taxon>Eukaryota</taxon>
        <taxon>Metazoa</taxon>
        <taxon>Chordata</taxon>
        <taxon>Craniata</taxon>
        <taxon>Vertebrata</taxon>
        <taxon>Euteleostomi</taxon>
        <taxon>Mammalia</taxon>
        <taxon>Eutheria</taxon>
        <taxon>Laurasiatheria</taxon>
        <taxon>Artiodactyla</taxon>
        <taxon>Whippomorpha</taxon>
        <taxon>Cetacea</taxon>
        <taxon>Mysticeti</taxon>
        <taxon>Balaenopteridae</taxon>
        <taxon>Balaenoptera</taxon>
    </lineage>
</organism>